<proteinExistence type="inferred from homology"/>
<accession>B5FNT8</accession>
<keyword id="KW-0046">Antibiotic resistance</keyword>
<keyword id="KW-0997">Cell inner membrane</keyword>
<keyword id="KW-1003">Cell membrane</keyword>
<keyword id="KW-0328">Glycosyltransferase</keyword>
<keyword id="KW-0441">Lipid A biosynthesis</keyword>
<keyword id="KW-0444">Lipid biosynthesis</keyword>
<keyword id="KW-0443">Lipid metabolism</keyword>
<keyword id="KW-0448">Lipopolysaccharide biosynthesis</keyword>
<keyword id="KW-0472">Membrane</keyword>
<keyword id="KW-0808">Transferase</keyword>
<keyword id="KW-0812">Transmembrane</keyword>
<keyword id="KW-1133">Transmembrane helix</keyword>
<name>ARNC_SALDC</name>
<dbReference type="EC" id="2.4.2.53" evidence="1"/>
<dbReference type="EMBL" id="CP001144">
    <property type="protein sequence ID" value="ACH75246.1"/>
    <property type="molecule type" value="Genomic_DNA"/>
</dbReference>
<dbReference type="RefSeq" id="WP_000458887.1">
    <property type="nucleotide sequence ID" value="NC_011205.1"/>
</dbReference>
<dbReference type="SMR" id="B5FNT8"/>
<dbReference type="CAZy" id="GT2">
    <property type="family name" value="Glycosyltransferase Family 2"/>
</dbReference>
<dbReference type="KEGG" id="sed:SeD_A2642"/>
<dbReference type="HOGENOM" id="CLU_033536_0_0_6"/>
<dbReference type="UniPathway" id="UPA00030"/>
<dbReference type="UniPathway" id="UPA00036">
    <property type="reaction ID" value="UER00495"/>
</dbReference>
<dbReference type="Proteomes" id="UP000008322">
    <property type="component" value="Chromosome"/>
</dbReference>
<dbReference type="GO" id="GO:0005886">
    <property type="term" value="C:plasma membrane"/>
    <property type="evidence" value="ECO:0007669"/>
    <property type="project" value="UniProtKB-SubCell"/>
</dbReference>
<dbReference type="GO" id="GO:0016780">
    <property type="term" value="F:phosphotransferase activity, for other substituted phosphate groups"/>
    <property type="evidence" value="ECO:0007669"/>
    <property type="project" value="UniProtKB-UniRule"/>
</dbReference>
<dbReference type="GO" id="GO:0099621">
    <property type="term" value="F:undecaprenyl-phosphate 4-deoxy-4-formamido-L-arabinose transferase activity"/>
    <property type="evidence" value="ECO:0007669"/>
    <property type="project" value="UniProtKB-EC"/>
</dbReference>
<dbReference type="GO" id="GO:0036108">
    <property type="term" value="P:4-amino-4-deoxy-alpha-L-arabinopyranosyl undecaprenyl phosphate biosynthetic process"/>
    <property type="evidence" value="ECO:0007669"/>
    <property type="project" value="UniProtKB-UniRule"/>
</dbReference>
<dbReference type="GO" id="GO:0009245">
    <property type="term" value="P:lipid A biosynthetic process"/>
    <property type="evidence" value="ECO:0007669"/>
    <property type="project" value="UniProtKB-UniRule"/>
</dbReference>
<dbReference type="GO" id="GO:0009103">
    <property type="term" value="P:lipopolysaccharide biosynthetic process"/>
    <property type="evidence" value="ECO:0007669"/>
    <property type="project" value="UniProtKB-UniRule"/>
</dbReference>
<dbReference type="GO" id="GO:0046677">
    <property type="term" value="P:response to antibiotic"/>
    <property type="evidence" value="ECO:0007669"/>
    <property type="project" value="UniProtKB-KW"/>
</dbReference>
<dbReference type="CDD" id="cd04187">
    <property type="entry name" value="DPM1_like_bac"/>
    <property type="match status" value="1"/>
</dbReference>
<dbReference type="FunFam" id="3.90.550.10:FF:000019">
    <property type="entry name" value="Undecaprenyl-phosphate 4-deoxy-4-formamido-L-arabinose transferase"/>
    <property type="match status" value="1"/>
</dbReference>
<dbReference type="Gene3D" id="3.90.550.10">
    <property type="entry name" value="Spore Coat Polysaccharide Biosynthesis Protein SpsA, Chain A"/>
    <property type="match status" value="1"/>
</dbReference>
<dbReference type="HAMAP" id="MF_01164">
    <property type="entry name" value="ArnC_transfer"/>
    <property type="match status" value="1"/>
</dbReference>
<dbReference type="InterPro" id="IPR022857">
    <property type="entry name" value="ArnC_tfrase"/>
</dbReference>
<dbReference type="InterPro" id="IPR001173">
    <property type="entry name" value="Glyco_trans_2-like"/>
</dbReference>
<dbReference type="InterPro" id="IPR050256">
    <property type="entry name" value="Glycosyltransferase_2"/>
</dbReference>
<dbReference type="InterPro" id="IPR029044">
    <property type="entry name" value="Nucleotide-diphossugar_trans"/>
</dbReference>
<dbReference type="NCBIfam" id="NF007986">
    <property type="entry name" value="PRK10714.1"/>
    <property type="match status" value="1"/>
</dbReference>
<dbReference type="PANTHER" id="PTHR48090:SF3">
    <property type="entry name" value="UNDECAPRENYL-PHOSPHATE 4-DEOXY-4-FORMAMIDO-L-ARABINOSE TRANSFERASE"/>
    <property type="match status" value="1"/>
</dbReference>
<dbReference type="PANTHER" id="PTHR48090">
    <property type="entry name" value="UNDECAPRENYL-PHOSPHATE 4-DEOXY-4-FORMAMIDO-L-ARABINOSE TRANSFERASE-RELATED"/>
    <property type="match status" value="1"/>
</dbReference>
<dbReference type="Pfam" id="PF00535">
    <property type="entry name" value="Glycos_transf_2"/>
    <property type="match status" value="1"/>
</dbReference>
<dbReference type="SUPFAM" id="SSF53448">
    <property type="entry name" value="Nucleotide-diphospho-sugar transferases"/>
    <property type="match status" value="1"/>
</dbReference>
<reference key="1">
    <citation type="journal article" date="2011" name="J. Bacteriol.">
        <title>Comparative genomics of 28 Salmonella enterica isolates: evidence for CRISPR-mediated adaptive sublineage evolution.</title>
        <authorList>
            <person name="Fricke W.F."/>
            <person name="Mammel M.K."/>
            <person name="McDermott P.F."/>
            <person name="Tartera C."/>
            <person name="White D.G."/>
            <person name="Leclerc J.E."/>
            <person name="Ravel J."/>
            <person name="Cebula T.A."/>
        </authorList>
    </citation>
    <scope>NUCLEOTIDE SEQUENCE [LARGE SCALE GENOMIC DNA]</scope>
    <source>
        <strain>CT_02021853</strain>
    </source>
</reference>
<comment type="function">
    <text evidence="1">Catalyzes the transfer of 4-deoxy-4-formamido-L-arabinose from UDP to undecaprenyl phosphate. The modified arabinose is attached to lipid A and is required for resistance to polymyxin and cationic antimicrobial peptides.</text>
</comment>
<comment type="catalytic activity">
    <reaction evidence="1">
        <text>UDP-4-deoxy-4-formamido-beta-L-arabinose + di-trans,octa-cis-undecaprenyl phosphate = 4-deoxy-4-formamido-alpha-L-arabinopyranosyl di-trans,octa-cis-undecaprenyl phosphate + UDP</text>
        <dbReference type="Rhea" id="RHEA:27722"/>
        <dbReference type="ChEBI" id="CHEBI:58223"/>
        <dbReference type="ChEBI" id="CHEBI:58709"/>
        <dbReference type="ChEBI" id="CHEBI:58909"/>
        <dbReference type="ChEBI" id="CHEBI:60392"/>
        <dbReference type="EC" id="2.4.2.53"/>
    </reaction>
</comment>
<comment type="pathway">
    <text evidence="1">Glycolipid biosynthesis; 4-amino-4-deoxy-alpha-L-arabinose undecaprenyl phosphate biosynthesis; 4-amino-4-deoxy-alpha-L-arabinose undecaprenyl phosphate from UDP-4-deoxy-4-formamido-beta-L-arabinose and undecaprenyl phosphate: step 1/2.</text>
</comment>
<comment type="pathway">
    <text evidence="1">Bacterial outer membrane biogenesis; lipopolysaccharide biosynthesis.</text>
</comment>
<comment type="subcellular location">
    <subcellularLocation>
        <location evidence="1">Cell inner membrane</location>
        <topology evidence="1">Multi-pass membrane protein</topology>
    </subcellularLocation>
</comment>
<comment type="similarity">
    <text evidence="1">Belongs to the glycosyltransferase 2 family.</text>
</comment>
<feature type="chain" id="PRO_1000137918" description="Undecaprenyl-phosphate 4-deoxy-4-formamido-L-arabinose transferase">
    <location>
        <begin position="1"/>
        <end position="327"/>
    </location>
</feature>
<feature type="topological domain" description="Cytoplasmic" evidence="1">
    <location>
        <begin position="1"/>
        <end position="235"/>
    </location>
</feature>
<feature type="transmembrane region" description="Helical" evidence="1">
    <location>
        <begin position="236"/>
        <end position="256"/>
    </location>
</feature>
<feature type="topological domain" description="Periplasmic" evidence="1">
    <location>
        <begin position="257"/>
        <end position="269"/>
    </location>
</feature>
<feature type="transmembrane region" description="Helical" evidence="1">
    <location>
        <begin position="270"/>
        <end position="290"/>
    </location>
</feature>
<feature type="topological domain" description="Cytoplasmic" evidence="1">
    <location>
        <begin position="291"/>
        <end position="327"/>
    </location>
</feature>
<protein>
    <recommendedName>
        <fullName evidence="1">Undecaprenyl-phosphate 4-deoxy-4-formamido-L-arabinose transferase</fullName>
        <ecNumber evidence="1">2.4.2.53</ecNumber>
    </recommendedName>
    <alternativeName>
        <fullName evidence="1">Undecaprenyl-phosphate Ara4FN transferase</fullName>
        <shortName evidence="1">Ara4FN transferase</shortName>
    </alternativeName>
</protein>
<organism>
    <name type="scientific">Salmonella dublin (strain CT_02021853)</name>
    <dbReference type="NCBI Taxonomy" id="439851"/>
    <lineage>
        <taxon>Bacteria</taxon>
        <taxon>Pseudomonadati</taxon>
        <taxon>Pseudomonadota</taxon>
        <taxon>Gammaproteobacteria</taxon>
        <taxon>Enterobacterales</taxon>
        <taxon>Enterobacteriaceae</taxon>
        <taxon>Salmonella</taxon>
    </lineage>
</organism>
<sequence>MFDAAPIKKVSVVIPVYNEQESLPELIRRTTAACESLGKAWEILLIDDGSSDSSAELMVKASQEADSHIISILLNRNYGQHAAIMAGFSHVSGDLIITLDADLQNPPEEIPRLVAKADEGFDVVGTVRQNRQDSLFRKSASKIINLLIQRTTGKAMGDYGCMLRAYRRPIIDTMLRCHERSTFIPILANIFARRATEIPVHHAEREFGDSKYSFMRLINLMYDLVTCLTTTPLRLLSLLGSVIAIGGFSLSVLLIVLRLALGPQWAAEGVFMLFAVLFTFIGAQFIGMGLLGEYIGRIYNDVRARPRYFVQQVIYPESTPFTEESHQ</sequence>
<gene>
    <name evidence="1" type="primary">arnC</name>
    <name type="ordered locus">SeD_A2642</name>
</gene>
<evidence type="ECO:0000255" key="1">
    <source>
        <dbReference type="HAMAP-Rule" id="MF_01164"/>
    </source>
</evidence>